<reference key="1">
    <citation type="journal article" date="2008" name="PLoS ONE">
        <title>Comparative analysis of Acinetobacters: three genomes for three lifestyles.</title>
        <authorList>
            <person name="Vallenet D."/>
            <person name="Nordmann P."/>
            <person name="Barbe V."/>
            <person name="Poirel L."/>
            <person name="Mangenot S."/>
            <person name="Bataille E."/>
            <person name="Dossat C."/>
            <person name="Gas S."/>
            <person name="Kreimeyer A."/>
            <person name="Lenoble P."/>
            <person name="Oztas S."/>
            <person name="Poulain J."/>
            <person name="Segurens B."/>
            <person name="Robert C."/>
            <person name="Abergel C."/>
            <person name="Claverie J.-M."/>
            <person name="Raoult D."/>
            <person name="Medigue C."/>
            <person name="Weissenbach J."/>
            <person name="Cruveiller S."/>
        </authorList>
    </citation>
    <scope>NUCLEOTIDE SEQUENCE [LARGE SCALE GENOMIC DNA]</scope>
    <source>
        <strain>AYE</strain>
    </source>
</reference>
<dbReference type="EC" id="3.5.3.4" evidence="1"/>
<dbReference type="EMBL" id="CU459141">
    <property type="protein sequence ID" value="CAM85114.1"/>
    <property type="molecule type" value="Genomic_DNA"/>
</dbReference>
<dbReference type="RefSeq" id="WP_000212411.1">
    <property type="nucleotide sequence ID" value="NZ_JBDGFB010000004.1"/>
</dbReference>
<dbReference type="SMR" id="B0V9T8"/>
<dbReference type="EnsemblBacteria" id="CAM85114">
    <property type="protein sequence ID" value="CAM85114"/>
    <property type="gene ID" value="ABAYE0128"/>
</dbReference>
<dbReference type="KEGG" id="aby:ABAYE0128"/>
<dbReference type="HOGENOM" id="CLU_038797_1_2_6"/>
<dbReference type="UniPathway" id="UPA00395">
    <property type="reaction ID" value="UER00654"/>
</dbReference>
<dbReference type="GO" id="GO:0004037">
    <property type="term" value="F:allantoicase activity"/>
    <property type="evidence" value="ECO:0007669"/>
    <property type="project" value="UniProtKB-UniRule"/>
</dbReference>
<dbReference type="GO" id="GO:0000256">
    <property type="term" value="P:allantoin catabolic process"/>
    <property type="evidence" value="ECO:0007669"/>
    <property type="project" value="UniProtKB-UniRule"/>
</dbReference>
<dbReference type="GO" id="GO:0006144">
    <property type="term" value="P:purine nucleobase metabolic process"/>
    <property type="evidence" value="ECO:0007669"/>
    <property type="project" value="UniProtKB-KW"/>
</dbReference>
<dbReference type="Gene3D" id="2.60.120.260">
    <property type="entry name" value="Galactose-binding domain-like"/>
    <property type="match status" value="2"/>
</dbReference>
<dbReference type="HAMAP" id="MF_00813">
    <property type="entry name" value="Allantoicase"/>
    <property type="match status" value="1"/>
</dbReference>
<dbReference type="InterPro" id="IPR005164">
    <property type="entry name" value="Allantoicase"/>
</dbReference>
<dbReference type="InterPro" id="IPR015908">
    <property type="entry name" value="Allantoicase_dom"/>
</dbReference>
<dbReference type="InterPro" id="IPR008979">
    <property type="entry name" value="Galactose-bd-like_sf"/>
</dbReference>
<dbReference type="NCBIfam" id="TIGR02961">
    <property type="entry name" value="allantoicase"/>
    <property type="match status" value="1"/>
</dbReference>
<dbReference type="PANTHER" id="PTHR12045">
    <property type="entry name" value="ALLANTOICASE"/>
    <property type="match status" value="1"/>
</dbReference>
<dbReference type="PANTHER" id="PTHR12045:SF3">
    <property type="entry name" value="INACTIVE ALLANTOICASE-RELATED"/>
    <property type="match status" value="1"/>
</dbReference>
<dbReference type="Pfam" id="PF03561">
    <property type="entry name" value="Allantoicase"/>
    <property type="match status" value="2"/>
</dbReference>
<dbReference type="PIRSF" id="PIRSF016516">
    <property type="entry name" value="Allantoicase"/>
    <property type="match status" value="1"/>
</dbReference>
<dbReference type="SUPFAM" id="SSF49785">
    <property type="entry name" value="Galactose-binding domain-like"/>
    <property type="match status" value="2"/>
</dbReference>
<sequence length="336" mass="37829">MATLHAPAFELPEILNTKTNLADARIGAQVIECSDDFFAEAKRMLQFEAPIFVEDKFDDHGKWMDGWETRRKRHAGYDWCIVKLGVSGKISALDIDTTFFTGNYPASASLEACYAPNGDLTGVTWQSILENTELGPSQHHIFMVNNDAIFTHIRLNIFPDGGVARLRVYGDVHIQVTDHEQTLDLLALENGGRVIAYSDAHFGHPRNLINPGRGVNMGDGWETKRRRAPGYDWCILALGKSGKIEKIEIDTAHFKGNFPAEVSIQAVYLENATDAQLIPQSMFWSYLLEAQPMQMDHIHEYVNEILKHEKISHIRINMIPDGGISRVRLWGKIAKS</sequence>
<name>ALLC_ACIBY</name>
<comment type="catalytic activity">
    <reaction evidence="1">
        <text>allantoate + H2O = (S)-ureidoglycolate + urea</text>
        <dbReference type="Rhea" id="RHEA:11016"/>
        <dbReference type="ChEBI" id="CHEBI:15377"/>
        <dbReference type="ChEBI" id="CHEBI:16199"/>
        <dbReference type="ChEBI" id="CHEBI:17536"/>
        <dbReference type="ChEBI" id="CHEBI:57296"/>
        <dbReference type="EC" id="3.5.3.4"/>
    </reaction>
</comment>
<comment type="pathway">
    <text evidence="1">Nitrogen metabolism; (S)-allantoin degradation; (S)-ureidoglycolate from allantoate (aminidohydrolase route): step 1/1.</text>
</comment>
<comment type="similarity">
    <text evidence="1">Belongs to the allantoicase family.</text>
</comment>
<gene>
    <name evidence="1" type="primary">alc</name>
    <name type="ordered locus">ABAYE0128</name>
</gene>
<feature type="chain" id="PRO_1000134089" description="Probable allantoicase">
    <location>
        <begin position="1"/>
        <end position="336"/>
    </location>
</feature>
<proteinExistence type="inferred from homology"/>
<organism>
    <name type="scientific">Acinetobacter baumannii (strain AYE)</name>
    <dbReference type="NCBI Taxonomy" id="509173"/>
    <lineage>
        <taxon>Bacteria</taxon>
        <taxon>Pseudomonadati</taxon>
        <taxon>Pseudomonadota</taxon>
        <taxon>Gammaproteobacteria</taxon>
        <taxon>Moraxellales</taxon>
        <taxon>Moraxellaceae</taxon>
        <taxon>Acinetobacter</taxon>
        <taxon>Acinetobacter calcoaceticus/baumannii complex</taxon>
    </lineage>
</organism>
<protein>
    <recommendedName>
        <fullName evidence="1">Probable allantoicase</fullName>
        <ecNumber evidence="1">3.5.3.4</ecNumber>
    </recommendedName>
    <alternativeName>
        <fullName evidence="1">Allantoate amidinohydrolase</fullName>
    </alternativeName>
</protein>
<keyword id="KW-0378">Hydrolase</keyword>
<keyword id="KW-0659">Purine metabolism</keyword>
<evidence type="ECO:0000255" key="1">
    <source>
        <dbReference type="HAMAP-Rule" id="MF_00813"/>
    </source>
</evidence>
<accession>B0V9T8</accession>